<dbReference type="EC" id="6.1.1.16" evidence="1"/>
<dbReference type="EMBL" id="CP001657">
    <property type="protein sequence ID" value="ACT13956.1"/>
    <property type="molecule type" value="Genomic_DNA"/>
</dbReference>
<dbReference type="RefSeq" id="WP_015841112.1">
    <property type="nucleotide sequence ID" value="NC_012917.1"/>
</dbReference>
<dbReference type="SMR" id="C6DAX2"/>
<dbReference type="STRING" id="561230.PC1_2933"/>
<dbReference type="KEGG" id="pct:PC1_2933"/>
<dbReference type="eggNOG" id="COG0215">
    <property type="taxonomic scope" value="Bacteria"/>
</dbReference>
<dbReference type="HOGENOM" id="CLU_013528_0_1_6"/>
<dbReference type="OrthoDB" id="9815130at2"/>
<dbReference type="Proteomes" id="UP000002736">
    <property type="component" value="Chromosome"/>
</dbReference>
<dbReference type="GO" id="GO:0005829">
    <property type="term" value="C:cytosol"/>
    <property type="evidence" value="ECO:0007669"/>
    <property type="project" value="TreeGrafter"/>
</dbReference>
<dbReference type="GO" id="GO:0005524">
    <property type="term" value="F:ATP binding"/>
    <property type="evidence" value="ECO:0007669"/>
    <property type="project" value="UniProtKB-UniRule"/>
</dbReference>
<dbReference type="GO" id="GO:0004817">
    <property type="term" value="F:cysteine-tRNA ligase activity"/>
    <property type="evidence" value="ECO:0007669"/>
    <property type="project" value="UniProtKB-UniRule"/>
</dbReference>
<dbReference type="GO" id="GO:0008270">
    <property type="term" value="F:zinc ion binding"/>
    <property type="evidence" value="ECO:0007669"/>
    <property type="project" value="UniProtKB-UniRule"/>
</dbReference>
<dbReference type="GO" id="GO:0006423">
    <property type="term" value="P:cysteinyl-tRNA aminoacylation"/>
    <property type="evidence" value="ECO:0007669"/>
    <property type="project" value="UniProtKB-UniRule"/>
</dbReference>
<dbReference type="CDD" id="cd07963">
    <property type="entry name" value="Anticodon_Ia_Cys"/>
    <property type="match status" value="1"/>
</dbReference>
<dbReference type="CDD" id="cd00672">
    <property type="entry name" value="CysRS_core"/>
    <property type="match status" value="1"/>
</dbReference>
<dbReference type="FunFam" id="1.20.120.1910:FF:000001">
    <property type="entry name" value="Cysteine--tRNA ligase"/>
    <property type="match status" value="1"/>
</dbReference>
<dbReference type="FunFam" id="3.40.50.620:FF:000009">
    <property type="entry name" value="Cysteine--tRNA ligase"/>
    <property type="match status" value="1"/>
</dbReference>
<dbReference type="Gene3D" id="1.20.120.1910">
    <property type="entry name" value="Cysteine-tRNA ligase, C-terminal anti-codon recognition domain"/>
    <property type="match status" value="1"/>
</dbReference>
<dbReference type="Gene3D" id="3.40.50.620">
    <property type="entry name" value="HUPs"/>
    <property type="match status" value="1"/>
</dbReference>
<dbReference type="HAMAP" id="MF_00041">
    <property type="entry name" value="Cys_tRNA_synth"/>
    <property type="match status" value="1"/>
</dbReference>
<dbReference type="InterPro" id="IPR015803">
    <property type="entry name" value="Cys-tRNA-ligase"/>
</dbReference>
<dbReference type="InterPro" id="IPR015273">
    <property type="entry name" value="Cys-tRNA-synt_Ia_DALR"/>
</dbReference>
<dbReference type="InterPro" id="IPR024909">
    <property type="entry name" value="Cys-tRNA/MSH_ligase"/>
</dbReference>
<dbReference type="InterPro" id="IPR056411">
    <property type="entry name" value="CysS_C"/>
</dbReference>
<dbReference type="InterPro" id="IPR014729">
    <property type="entry name" value="Rossmann-like_a/b/a_fold"/>
</dbReference>
<dbReference type="InterPro" id="IPR032678">
    <property type="entry name" value="tRNA-synt_1_cat_dom"/>
</dbReference>
<dbReference type="InterPro" id="IPR009080">
    <property type="entry name" value="tRNAsynth_Ia_anticodon-bd"/>
</dbReference>
<dbReference type="NCBIfam" id="TIGR00435">
    <property type="entry name" value="cysS"/>
    <property type="match status" value="1"/>
</dbReference>
<dbReference type="PANTHER" id="PTHR10890:SF3">
    <property type="entry name" value="CYSTEINE--TRNA LIGASE, CYTOPLASMIC"/>
    <property type="match status" value="1"/>
</dbReference>
<dbReference type="PANTHER" id="PTHR10890">
    <property type="entry name" value="CYSTEINYL-TRNA SYNTHETASE"/>
    <property type="match status" value="1"/>
</dbReference>
<dbReference type="Pfam" id="PF23493">
    <property type="entry name" value="CysS_C"/>
    <property type="match status" value="1"/>
</dbReference>
<dbReference type="Pfam" id="PF09190">
    <property type="entry name" value="DALR_2"/>
    <property type="match status" value="1"/>
</dbReference>
<dbReference type="Pfam" id="PF01406">
    <property type="entry name" value="tRNA-synt_1e"/>
    <property type="match status" value="1"/>
</dbReference>
<dbReference type="PRINTS" id="PR00983">
    <property type="entry name" value="TRNASYNTHCYS"/>
</dbReference>
<dbReference type="SMART" id="SM00840">
    <property type="entry name" value="DALR_2"/>
    <property type="match status" value="1"/>
</dbReference>
<dbReference type="SUPFAM" id="SSF47323">
    <property type="entry name" value="Anticodon-binding domain of a subclass of class I aminoacyl-tRNA synthetases"/>
    <property type="match status" value="1"/>
</dbReference>
<dbReference type="SUPFAM" id="SSF52374">
    <property type="entry name" value="Nucleotidylyl transferase"/>
    <property type="match status" value="1"/>
</dbReference>
<reference key="1">
    <citation type="submission" date="2009-07" db="EMBL/GenBank/DDBJ databases">
        <title>Complete sequence of Pectobacterium carotovorum subsp. carotovorum PC1.</title>
        <authorList>
            <consortium name="US DOE Joint Genome Institute"/>
            <person name="Lucas S."/>
            <person name="Copeland A."/>
            <person name="Lapidus A."/>
            <person name="Glavina del Rio T."/>
            <person name="Tice H."/>
            <person name="Bruce D."/>
            <person name="Goodwin L."/>
            <person name="Pitluck S."/>
            <person name="Munk A.C."/>
            <person name="Brettin T."/>
            <person name="Detter J.C."/>
            <person name="Han C."/>
            <person name="Tapia R."/>
            <person name="Larimer F."/>
            <person name="Land M."/>
            <person name="Hauser L."/>
            <person name="Kyrpides N."/>
            <person name="Mikhailova N."/>
            <person name="Balakrishnan V."/>
            <person name="Glasner J."/>
            <person name="Perna N.T."/>
        </authorList>
    </citation>
    <scope>NUCLEOTIDE SEQUENCE [LARGE SCALE GENOMIC DNA]</scope>
    <source>
        <strain>PC1</strain>
    </source>
</reference>
<comment type="catalytic activity">
    <reaction evidence="1">
        <text>tRNA(Cys) + L-cysteine + ATP = L-cysteinyl-tRNA(Cys) + AMP + diphosphate</text>
        <dbReference type="Rhea" id="RHEA:17773"/>
        <dbReference type="Rhea" id="RHEA-COMP:9661"/>
        <dbReference type="Rhea" id="RHEA-COMP:9679"/>
        <dbReference type="ChEBI" id="CHEBI:30616"/>
        <dbReference type="ChEBI" id="CHEBI:33019"/>
        <dbReference type="ChEBI" id="CHEBI:35235"/>
        <dbReference type="ChEBI" id="CHEBI:78442"/>
        <dbReference type="ChEBI" id="CHEBI:78517"/>
        <dbReference type="ChEBI" id="CHEBI:456215"/>
        <dbReference type="EC" id="6.1.1.16"/>
    </reaction>
</comment>
<comment type="cofactor">
    <cofactor evidence="1">
        <name>Zn(2+)</name>
        <dbReference type="ChEBI" id="CHEBI:29105"/>
    </cofactor>
    <text evidence="1">Binds 1 zinc ion per subunit.</text>
</comment>
<comment type="subunit">
    <text evidence="1">Monomer.</text>
</comment>
<comment type="subcellular location">
    <subcellularLocation>
        <location evidence="1">Cytoplasm</location>
    </subcellularLocation>
</comment>
<comment type="similarity">
    <text evidence="1">Belongs to the class-I aminoacyl-tRNA synthetase family.</text>
</comment>
<gene>
    <name evidence="1" type="primary">cysS</name>
    <name type="ordered locus">PC1_2933</name>
</gene>
<accession>C6DAX2</accession>
<sequence length="461" mass="52363">MLKIFNTLSRQKEEFKPIHAGQVGMYVCGITVYDLCHIGHGRTFVAFDVVARYLRYLGYSLKYVRNVTDIDDKIIKRAAENGETSDQLTTRMIAEMHADFDALNILRPDAEPRATHHITDIIEMVETLIARRHAYVASNGDVMFSVDTAPGYGVLSRQDLDQLQAGARVEITEVKRNPMDFVLWKMSKPGEPHWSSPWGEGRPGWHIECSAMNCKQLGEHFDIHGGGSDLMFPHHENEIAQSSCAHDGPYVNYWMHSGMVMVDREKMSKSLNNFFTVRDVLAYYDPETVRYFLMSGHYRSQLNYSEDNLKQARAALERLYTALRGTDPDAAAQGGDEFEGRFREAMDDDFNTPEAYSVLFDMAREVNRLKTEDAQAANQLASALRKLSGVLGLLEQDPEQFLQNGAQVDNDEVKEIEALIQQRKDARAAKDWALADQARDRLNEMGIVLEDGPQGTIWRRK</sequence>
<proteinExistence type="inferred from homology"/>
<keyword id="KW-0030">Aminoacyl-tRNA synthetase</keyword>
<keyword id="KW-0067">ATP-binding</keyword>
<keyword id="KW-0963">Cytoplasm</keyword>
<keyword id="KW-0436">Ligase</keyword>
<keyword id="KW-0479">Metal-binding</keyword>
<keyword id="KW-0547">Nucleotide-binding</keyword>
<keyword id="KW-0648">Protein biosynthesis</keyword>
<keyword id="KW-0862">Zinc</keyword>
<name>SYC_PECCP</name>
<feature type="chain" id="PRO_1000202129" description="Cysteine--tRNA ligase">
    <location>
        <begin position="1"/>
        <end position="461"/>
    </location>
</feature>
<feature type="short sequence motif" description="'HIGH' region">
    <location>
        <begin position="30"/>
        <end position="40"/>
    </location>
</feature>
<feature type="short sequence motif" description="'KMSKS' region">
    <location>
        <begin position="266"/>
        <end position="270"/>
    </location>
</feature>
<feature type="binding site" evidence="1">
    <location>
        <position position="28"/>
    </location>
    <ligand>
        <name>Zn(2+)</name>
        <dbReference type="ChEBI" id="CHEBI:29105"/>
    </ligand>
</feature>
<feature type="binding site" evidence="1">
    <location>
        <position position="209"/>
    </location>
    <ligand>
        <name>Zn(2+)</name>
        <dbReference type="ChEBI" id="CHEBI:29105"/>
    </ligand>
</feature>
<feature type="binding site" evidence="1">
    <location>
        <position position="234"/>
    </location>
    <ligand>
        <name>Zn(2+)</name>
        <dbReference type="ChEBI" id="CHEBI:29105"/>
    </ligand>
</feature>
<feature type="binding site" evidence="1">
    <location>
        <position position="238"/>
    </location>
    <ligand>
        <name>Zn(2+)</name>
        <dbReference type="ChEBI" id="CHEBI:29105"/>
    </ligand>
</feature>
<feature type="binding site" evidence="1">
    <location>
        <position position="269"/>
    </location>
    <ligand>
        <name>ATP</name>
        <dbReference type="ChEBI" id="CHEBI:30616"/>
    </ligand>
</feature>
<evidence type="ECO:0000255" key="1">
    <source>
        <dbReference type="HAMAP-Rule" id="MF_00041"/>
    </source>
</evidence>
<organism>
    <name type="scientific">Pectobacterium carotovorum subsp. carotovorum (strain PC1)</name>
    <dbReference type="NCBI Taxonomy" id="561230"/>
    <lineage>
        <taxon>Bacteria</taxon>
        <taxon>Pseudomonadati</taxon>
        <taxon>Pseudomonadota</taxon>
        <taxon>Gammaproteobacteria</taxon>
        <taxon>Enterobacterales</taxon>
        <taxon>Pectobacteriaceae</taxon>
        <taxon>Pectobacterium</taxon>
    </lineage>
</organism>
<protein>
    <recommendedName>
        <fullName evidence="1">Cysteine--tRNA ligase</fullName>
        <ecNumber evidence="1">6.1.1.16</ecNumber>
    </recommendedName>
    <alternativeName>
        <fullName evidence="1">Cysteinyl-tRNA synthetase</fullName>
        <shortName evidence="1">CysRS</shortName>
    </alternativeName>
</protein>